<protein>
    <recommendedName>
        <fullName>Uncharacterized protein R297</fullName>
    </recommendedName>
</protein>
<name>YR297_MIMIV</name>
<accession>Q5UPY3</accession>
<feature type="chain" id="PRO_0000071262" description="Uncharacterized protein R297">
    <location>
        <begin position="1"/>
        <end position="168"/>
    </location>
</feature>
<feature type="region of interest" description="Disordered" evidence="1">
    <location>
        <begin position="37"/>
        <end position="74"/>
    </location>
</feature>
<feature type="region of interest" description="Disordered" evidence="1">
    <location>
        <begin position="81"/>
        <end position="100"/>
    </location>
</feature>
<feature type="region of interest" description="Disordered" evidence="1">
    <location>
        <begin position="117"/>
        <end position="168"/>
    </location>
</feature>
<feature type="compositionally biased region" description="Polar residues" evidence="1">
    <location>
        <begin position="52"/>
        <end position="74"/>
    </location>
</feature>
<feature type="compositionally biased region" description="Polar residues" evidence="1">
    <location>
        <begin position="82"/>
        <end position="95"/>
    </location>
</feature>
<feature type="compositionally biased region" description="Low complexity" evidence="1">
    <location>
        <begin position="120"/>
        <end position="129"/>
    </location>
</feature>
<feature type="compositionally biased region" description="Polar residues" evidence="1">
    <location>
        <begin position="130"/>
        <end position="158"/>
    </location>
</feature>
<organismHost>
    <name type="scientific">Acanthamoeba polyphaga</name>
    <name type="common">Amoeba</name>
    <dbReference type="NCBI Taxonomy" id="5757"/>
</organismHost>
<dbReference type="EMBL" id="AY653733">
    <property type="protein sequence ID" value="AAV50569.1"/>
    <property type="molecule type" value="Genomic_DNA"/>
</dbReference>
<dbReference type="Proteomes" id="UP000001134">
    <property type="component" value="Genome"/>
</dbReference>
<evidence type="ECO:0000256" key="1">
    <source>
        <dbReference type="SAM" id="MobiDB-lite"/>
    </source>
</evidence>
<proteinExistence type="predicted"/>
<gene>
    <name type="ordered locus">MIMI_R297</name>
</gene>
<organism>
    <name type="scientific">Acanthamoeba polyphaga mimivirus</name>
    <name type="common">APMV</name>
    <dbReference type="NCBI Taxonomy" id="212035"/>
    <lineage>
        <taxon>Viruses</taxon>
        <taxon>Varidnaviria</taxon>
        <taxon>Bamfordvirae</taxon>
        <taxon>Nucleocytoviricota</taxon>
        <taxon>Megaviricetes</taxon>
        <taxon>Imitervirales</taxon>
        <taxon>Mimiviridae</taxon>
        <taxon>Megamimivirinae</taxon>
        <taxon>Mimivirus</taxon>
        <taxon>Mimivirus bradfordmassiliense</taxon>
    </lineage>
</organism>
<sequence length="168" mass="20007">MTSLNTNVEHRRTRTTISQIIHDMTPENKFYITVADGGSKRFRNKPNDQSRHSGQYQPRNLSGKTNISTQSQFTPRLYGKQYNYNQPNRLQTRSVRPNYYSGYRYNNRTGNQEFYPMQPFNNQSFNNQSRTHQSKTYQHNQQKRSFNGPRNNGPQNNVPRFFQREETN</sequence>
<keyword id="KW-1185">Reference proteome</keyword>
<reference key="1">
    <citation type="journal article" date="2004" name="Science">
        <title>The 1.2-megabase genome sequence of Mimivirus.</title>
        <authorList>
            <person name="Raoult D."/>
            <person name="Audic S."/>
            <person name="Robert C."/>
            <person name="Abergel C."/>
            <person name="Renesto P."/>
            <person name="Ogata H."/>
            <person name="La Scola B."/>
            <person name="Susan M."/>
            <person name="Claverie J.-M."/>
        </authorList>
    </citation>
    <scope>NUCLEOTIDE SEQUENCE [LARGE SCALE GENOMIC DNA]</scope>
    <source>
        <strain>Rowbotham-Bradford</strain>
    </source>
</reference>